<reference key="1">
    <citation type="journal article" date="2013" name="Stand. Genomic Sci.">
        <title>Complete genome sequence of Arthrobacter sp. strain FB24.</title>
        <authorList>
            <person name="Nakatsu C.H."/>
            <person name="Barabote R."/>
            <person name="Thompson S."/>
            <person name="Bruce D."/>
            <person name="Detter C."/>
            <person name="Brettin T."/>
            <person name="Han C."/>
            <person name="Beasley F."/>
            <person name="Chen W."/>
            <person name="Konopka A."/>
            <person name="Xie G."/>
        </authorList>
    </citation>
    <scope>NUCLEOTIDE SEQUENCE [LARGE SCALE GENOMIC DNA]</scope>
    <source>
        <strain>FB24</strain>
    </source>
</reference>
<feature type="chain" id="PRO_0000300278" description="DNA-directed RNA polymerase subunit beta">
    <location>
        <begin position="1"/>
        <end position="1171"/>
    </location>
</feature>
<keyword id="KW-0240">DNA-directed RNA polymerase</keyword>
<keyword id="KW-0548">Nucleotidyltransferase</keyword>
<keyword id="KW-1185">Reference proteome</keyword>
<keyword id="KW-0804">Transcription</keyword>
<keyword id="KW-0808">Transferase</keyword>
<proteinExistence type="inferred from homology"/>
<name>RPOB_ARTS2</name>
<gene>
    <name evidence="1" type="primary">rpoB</name>
    <name type="ordered locus">Arth_2984</name>
</gene>
<evidence type="ECO:0000255" key="1">
    <source>
        <dbReference type="HAMAP-Rule" id="MF_01321"/>
    </source>
</evidence>
<organism>
    <name type="scientific">Arthrobacter sp. (strain FB24)</name>
    <dbReference type="NCBI Taxonomy" id="290399"/>
    <lineage>
        <taxon>Bacteria</taxon>
        <taxon>Bacillati</taxon>
        <taxon>Actinomycetota</taxon>
        <taxon>Actinomycetes</taxon>
        <taxon>Micrococcales</taxon>
        <taxon>Micrococcaceae</taxon>
        <taxon>Arthrobacter</taxon>
    </lineage>
</organism>
<protein>
    <recommendedName>
        <fullName evidence="1">DNA-directed RNA polymerase subunit beta</fullName>
        <shortName evidence="1">RNAP subunit beta</shortName>
        <ecNumber evidence="1">2.7.7.6</ecNumber>
    </recommendedName>
    <alternativeName>
        <fullName evidence="1">RNA polymerase subunit beta</fullName>
    </alternativeName>
    <alternativeName>
        <fullName evidence="1">Transcriptase subunit beta</fullName>
    </alternativeName>
</protein>
<dbReference type="EC" id="2.7.7.6" evidence="1"/>
<dbReference type="EMBL" id="CP000454">
    <property type="protein sequence ID" value="ABK04363.1"/>
    <property type="molecule type" value="Genomic_DNA"/>
</dbReference>
<dbReference type="RefSeq" id="WP_011692816.1">
    <property type="nucleotide sequence ID" value="NC_008541.1"/>
</dbReference>
<dbReference type="SMR" id="A0JZ93"/>
<dbReference type="STRING" id="290399.Arth_2984"/>
<dbReference type="KEGG" id="art:Arth_2984"/>
<dbReference type="eggNOG" id="COG0085">
    <property type="taxonomic scope" value="Bacteria"/>
</dbReference>
<dbReference type="HOGENOM" id="CLU_000524_4_3_11"/>
<dbReference type="OrthoDB" id="9803954at2"/>
<dbReference type="Proteomes" id="UP000000754">
    <property type="component" value="Chromosome"/>
</dbReference>
<dbReference type="GO" id="GO:0000428">
    <property type="term" value="C:DNA-directed RNA polymerase complex"/>
    <property type="evidence" value="ECO:0007669"/>
    <property type="project" value="UniProtKB-KW"/>
</dbReference>
<dbReference type="GO" id="GO:0003677">
    <property type="term" value="F:DNA binding"/>
    <property type="evidence" value="ECO:0007669"/>
    <property type="project" value="UniProtKB-UniRule"/>
</dbReference>
<dbReference type="GO" id="GO:0003899">
    <property type="term" value="F:DNA-directed RNA polymerase activity"/>
    <property type="evidence" value="ECO:0007669"/>
    <property type="project" value="UniProtKB-UniRule"/>
</dbReference>
<dbReference type="GO" id="GO:0032549">
    <property type="term" value="F:ribonucleoside binding"/>
    <property type="evidence" value="ECO:0007669"/>
    <property type="project" value="InterPro"/>
</dbReference>
<dbReference type="GO" id="GO:0006351">
    <property type="term" value="P:DNA-templated transcription"/>
    <property type="evidence" value="ECO:0007669"/>
    <property type="project" value="UniProtKB-UniRule"/>
</dbReference>
<dbReference type="CDD" id="cd00653">
    <property type="entry name" value="RNA_pol_B_RPB2"/>
    <property type="match status" value="1"/>
</dbReference>
<dbReference type="FunFam" id="3.90.1800.10:FF:000001">
    <property type="entry name" value="DNA-directed RNA polymerase subunit beta"/>
    <property type="match status" value="1"/>
</dbReference>
<dbReference type="Gene3D" id="2.40.50.100">
    <property type="match status" value="1"/>
</dbReference>
<dbReference type="Gene3D" id="2.40.50.150">
    <property type="match status" value="1"/>
</dbReference>
<dbReference type="Gene3D" id="3.90.1100.10">
    <property type="match status" value="1"/>
</dbReference>
<dbReference type="Gene3D" id="2.30.150.10">
    <property type="entry name" value="DNA-directed RNA polymerase, beta subunit, external 1 domain"/>
    <property type="match status" value="1"/>
</dbReference>
<dbReference type="Gene3D" id="2.40.270.10">
    <property type="entry name" value="DNA-directed RNA polymerase, subunit 2, domain 6"/>
    <property type="match status" value="1"/>
</dbReference>
<dbReference type="Gene3D" id="3.90.1800.10">
    <property type="entry name" value="RNA polymerase alpha subunit dimerisation domain"/>
    <property type="match status" value="1"/>
</dbReference>
<dbReference type="Gene3D" id="3.90.1110.10">
    <property type="entry name" value="RNA polymerase Rpb2, domain 2"/>
    <property type="match status" value="1"/>
</dbReference>
<dbReference type="HAMAP" id="MF_01321">
    <property type="entry name" value="RNApol_bact_RpoB"/>
    <property type="match status" value="1"/>
</dbReference>
<dbReference type="InterPro" id="IPR042107">
    <property type="entry name" value="DNA-dir_RNA_pol_bsu_ext_1_sf"/>
</dbReference>
<dbReference type="InterPro" id="IPR019462">
    <property type="entry name" value="DNA-dir_RNA_pol_bsu_external_1"/>
</dbReference>
<dbReference type="InterPro" id="IPR015712">
    <property type="entry name" value="DNA-dir_RNA_pol_su2"/>
</dbReference>
<dbReference type="InterPro" id="IPR007120">
    <property type="entry name" value="DNA-dir_RNAP_su2_dom"/>
</dbReference>
<dbReference type="InterPro" id="IPR037033">
    <property type="entry name" value="DNA-dir_RNAP_su2_hyb_sf"/>
</dbReference>
<dbReference type="InterPro" id="IPR010243">
    <property type="entry name" value="RNA_pol_bsu_bac"/>
</dbReference>
<dbReference type="InterPro" id="IPR007121">
    <property type="entry name" value="RNA_pol_bsu_CS"/>
</dbReference>
<dbReference type="InterPro" id="IPR007644">
    <property type="entry name" value="RNA_pol_bsu_protrusion"/>
</dbReference>
<dbReference type="InterPro" id="IPR007642">
    <property type="entry name" value="RNA_pol_Rpb2_2"/>
</dbReference>
<dbReference type="InterPro" id="IPR037034">
    <property type="entry name" value="RNA_pol_Rpb2_2_sf"/>
</dbReference>
<dbReference type="InterPro" id="IPR007645">
    <property type="entry name" value="RNA_pol_Rpb2_3"/>
</dbReference>
<dbReference type="InterPro" id="IPR007641">
    <property type="entry name" value="RNA_pol_Rpb2_7"/>
</dbReference>
<dbReference type="InterPro" id="IPR014724">
    <property type="entry name" value="RNA_pol_RPB2_OB-fold"/>
</dbReference>
<dbReference type="NCBIfam" id="NF001616">
    <property type="entry name" value="PRK00405.1"/>
    <property type="match status" value="1"/>
</dbReference>
<dbReference type="NCBIfam" id="TIGR02013">
    <property type="entry name" value="rpoB"/>
    <property type="match status" value="1"/>
</dbReference>
<dbReference type="PANTHER" id="PTHR20856">
    <property type="entry name" value="DNA-DIRECTED RNA POLYMERASE I SUBUNIT 2"/>
    <property type="match status" value="1"/>
</dbReference>
<dbReference type="Pfam" id="PF04563">
    <property type="entry name" value="RNA_pol_Rpb2_1"/>
    <property type="match status" value="1"/>
</dbReference>
<dbReference type="Pfam" id="PF04561">
    <property type="entry name" value="RNA_pol_Rpb2_2"/>
    <property type="match status" value="1"/>
</dbReference>
<dbReference type="Pfam" id="PF04565">
    <property type="entry name" value="RNA_pol_Rpb2_3"/>
    <property type="match status" value="1"/>
</dbReference>
<dbReference type="Pfam" id="PF10385">
    <property type="entry name" value="RNA_pol_Rpb2_45"/>
    <property type="match status" value="1"/>
</dbReference>
<dbReference type="Pfam" id="PF00562">
    <property type="entry name" value="RNA_pol_Rpb2_6"/>
    <property type="match status" value="1"/>
</dbReference>
<dbReference type="Pfam" id="PF04560">
    <property type="entry name" value="RNA_pol_Rpb2_7"/>
    <property type="match status" value="1"/>
</dbReference>
<dbReference type="SUPFAM" id="SSF64484">
    <property type="entry name" value="beta and beta-prime subunits of DNA dependent RNA-polymerase"/>
    <property type="match status" value="1"/>
</dbReference>
<dbReference type="PROSITE" id="PS01166">
    <property type="entry name" value="RNA_POL_BETA"/>
    <property type="match status" value="1"/>
</dbReference>
<accession>A0JZ93</accession>
<comment type="function">
    <text evidence="1">DNA-dependent RNA polymerase catalyzes the transcription of DNA into RNA using the four ribonucleoside triphosphates as substrates.</text>
</comment>
<comment type="catalytic activity">
    <reaction evidence="1">
        <text>RNA(n) + a ribonucleoside 5'-triphosphate = RNA(n+1) + diphosphate</text>
        <dbReference type="Rhea" id="RHEA:21248"/>
        <dbReference type="Rhea" id="RHEA-COMP:14527"/>
        <dbReference type="Rhea" id="RHEA-COMP:17342"/>
        <dbReference type="ChEBI" id="CHEBI:33019"/>
        <dbReference type="ChEBI" id="CHEBI:61557"/>
        <dbReference type="ChEBI" id="CHEBI:140395"/>
        <dbReference type="EC" id="2.7.7.6"/>
    </reaction>
</comment>
<comment type="subunit">
    <text evidence="1">The RNAP catalytic core consists of 2 alpha, 1 beta, 1 beta' and 1 omega subunit. When a sigma factor is associated with the core the holoenzyme is formed, which can initiate transcription.</text>
</comment>
<comment type="similarity">
    <text evidence="1">Belongs to the RNA polymerase beta chain family.</text>
</comment>
<sequence length="1171" mass="128726">MVASSTSNVNNATAINADSTDGATRRLSFAKIHEPLDVPNLLALQTDSFDWLVGNERWQARVAKAVEEGDLSVATSSGLSDIFEEISPIEDFQGTMSLSFSDPEFADPKYTMAECKDRDATYSAPLYVKAEFMNNNTGEIKQQTVFMGDFPLMTEKGTFVVNGTERVVVSQLVRSPGAYFERTADKTSDKDIFTAKIIPSRGAWFELEIDKRDQVGVRLDRKRKQSVTVLLKALGWTEGQILEEFGQYDSMRATLEKDATETREDALLDIYRKLRPGEPPTVEAAQSLLDNLYFNSKRYDLAKVGRYKINRKLGIDRSLGDKEASVLHVEDIVAMIKFLVALHAGEKTLTGKRDGQDHELRVEIDDIDHFGNRRIRAVGELIENQVRTGLSRMERVVRERMTTQDVEAITPQTLINIRPVVAAIKEFFGTSQLSQFMDQNNPLSGLTHKRRLSALGPGGLSRDRAGMEVRDVHPSHYGRMCPIETPEGPNIGLIGSLASYGRINPFGFIETPYRLVSEGVVSDEVQYLTADDEAEVLIAQANAPLDENKKFAEETVLVRARGGGGEPVLVPAADVEFMDVSPRQMVSVATALIPFLEHDDANRALMGANMQRQAVPLVRSEAPFVGTGMERAAAVDAGDVVIAKKAGVVTEVSAELVIMLNDDGTETNYRINKFARSNQGNCYNHRVLVSEGQRLEVGGIIADGPATDQGELALGKNLLVAFMSWEGHNFEDAIILSQRIVAEDVLSSIHIEEHEIDARDTKLGAEEITRDIPNVSEEVLAGLDERGIIHIGAEVEAGDILVGKVTPKGETELTPEERLLRAIFGEKSREVRDTSLKVPHGESGTVIGVRVFDRDNDDELPPGVNQLVRVYVAAKRKITDGDKLAGRHGNKGVISKILPIEDMPFLADGTPVDIVLNPLGVPGRMNVGQVLETHLGWVAKTGWKIEGEPEWVKQLPNLPRESGSTTVATPVFDGAREEEITGLLDSTNVTRDGDRLINSSGKTRLFDGRSGEPFPDPISVGYMYILKLHHLVDDKIHARSTGPYSMITQQPLGGKAQFGGQRFGEMEVWALEAYGAAYTLQELLTIKSDDIHGRVKVYEAIVKGENIPEPGVPESFKVLIKEMQSLCLNVEVLSTDGTTIEMRDSDDAVFTAAEELGIDLSRAEPSSVEEV</sequence>